<dbReference type="SMR" id="P0DUP0"/>
<dbReference type="GO" id="GO:0005576">
    <property type="term" value="C:extracellular region"/>
    <property type="evidence" value="ECO:0007669"/>
    <property type="project" value="UniProtKB-SubCell"/>
</dbReference>
<dbReference type="GO" id="GO:0005509">
    <property type="term" value="F:calcium ion binding"/>
    <property type="evidence" value="ECO:0007669"/>
    <property type="project" value="InterPro"/>
</dbReference>
<dbReference type="GO" id="GO:0047498">
    <property type="term" value="F:calcium-dependent phospholipase A2 activity"/>
    <property type="evidence" value="ECO:0007669"/>
    <property type="project" value="TreeGrafter"/>
</dbReference>
<dbReference type="GO" id="GO:0005543">
    <property type="term" value="F:phospholipid binding"/>
    <property type="evidence" value="ECO:0007669"/>
    <property type="project" value="TreeGrafter"/>
</dbReference>
<dbReference type="GO" id="GO:0090729">
    <property type="term" value="F:toxin activity"/>
    <property type="evidence" value="ECO:0007669"/>
    <property type="project" value="UniProtKB-KW"/>
</dbReference>
<dbReference type="GO" id="GO:0050482">
    <property type="term" value="P:arachidonate secretion"/>
    <property type="evidence" value="ECO:0007669"/>
    <property type="project" value="InterPro"/>
</dbReference>
<dbReference type="GO" id="GO:0016042">
    <property type="term" value="P:lipid catabolic process"/>
    <property type="evidence" value="ECO:0007669"/>
    <property type="project" value="InterPro"/>
</dbReference>
<dbReference type="GO" id="GO:0042130">
    <property type="term" value="P:negative regulation of T cell proliferation"/>
    <property type="evidence" value="ECO:0007669"/>
    <property type="project" value="TreeGrafter"/>
</dbReference>
<dbReference type="GO" id="GO:0006644">
    <property type="term" value="P:phospholipid metabolic process"/>
    <property type="evidence" value="ECO:0007669"/>
    <property type="project" value="InterPro"/>
</dbReference>
<dbReference type="Gene3D" id="1.20.90.10">
    <property type="entry name" value="Phospholipase A2 domain"/>
    <property type="match status" value="1"/>
</dbReference>
<dbReference type="InterPro" id="IPR001211">
    <property type="entry name" value="PLipase_A2"/>
</dbReference>
<dbReference type="InterPro" id="IPR016090">
    <property type="entry name" value="PLipase_A2_dom"/>
</dbReference>
<dbReference type="InterPro" id="IPR036444">
    <property type="entry name" value="PLipase_A2_dom_sf"/>
</dbReference>
<dbReference type="InterPro" id="IPR033113">
    <property type="entry name" value="PLipase_A2_His_AS"/>
</dbReference>
<dbReference type="PANTHER" id="PTHR11716">
    <property type="entry name" value="PHOSPHOLIPASE A2 FAMILY MEMBER"/>
    <property type="match status" value="1"/>
</dbReference>
<dbReference type="PANTHER" id="PTHR11716:SF9">
    <property type="entry name" value="PHOSPHOLIPASE A2, MEMBRANE ASSOCIATED"/>
    <property type="match status" value="1"/>
</dbReference>
<dbReference type="Pfam" id="PF00068">
    <property type="entry name" value="Phospholip_A2_1"/>
    <property type="match status" value="1"/>
</dbReference>
<dbReference type="PRINTS" id="PR00389">
    <property type="entry name" value="PHPHLIPASEA2"/>
</dbReference>
<dbReference type="SMART" id="SM00085">
    <property type="entry name" value="PA2c"/>
    <property type="match status" value="1"/>
</dbReference>
<dbReference type="SUPFAM" id="SSF48619">
    <property type="entry name" value="Phospholipase A2, PLA2"/>
    <property type="match status" value="1"/>
</dbReference>
<dbReference type="PROSITE" id="PS00118">
    <property type="entry name" value="PA2_HIS"/>
    <property type="match status" value="1"/>
</dbReference>
<comment type="function">
    <text evidence="1 3">Snake venom phospholipase A2 (PLA2) that lacks enzymatic activity. Is myotoxic, induces edema, and causes systemic effects (renal changes that lead to proteinuria) on mice (PubMed:29170054). A model of myotoxic mechanism has been proposed: an apo Lys49-PLA2 is activated by the entrance of a hydrophobic molecule (e.g. fatty acid) at the hydrophobic channel of the protein leading to a reorientation of a monomer (By similarity). This reorientation causes a transition between 'inactive' to 'active' states, causing alignment of C-terminal and membrane-docking sites (MDoS) side-by-side and putting the membrane-disruption sites (MDiS) in the same plane, exposed to solvent and in a symmetric position for both monomers (By similarity). The MDoS region stabilizes the toxin on membrane by the interaction of charged residues with phospholipid head groups (By similarity). Subsequently, the MDiS region destabilizes the membrane with penetration of hydrophobic residues (By similarity). This insertion causes a disorganization of the membrane, allowing an uncontrolled influx of ions (i.e. calcium and sodium), and eventually triggering irreversible intracellular alterations and cell death (By similarity).</text>
</comment>
<comment type="subcellular location">
    <subcellularLocation>
        <location evidence="3">Secreted</location>
    </subcellularLocation>
</comment>
<comment type="tissue specificity">
    <text evidence="6">Expressed by the venom gland.</text>
</comment>
<comment type="similarity">
    <text evidence="5">Belongs to the phospholipase A2 family. Group II subfamily. K49 sub-subfamily.</text>
</comment>
<comment type="caution">
    <text evidence="5">Does not bind calcium as one of the calcium-binding sites is lost (Asp-&gt;Lys in position 48, which corresponds to 'Lys-49' in the current nomenclature).</text>
</comment>
<protein>
    <recommendedName>
        <fullName evidence="4">Basic phospholipase A2 homolog BdipTx-I</fullName>
        <shortName>svPLA2 homolog</shortName>
    </recommendedName>
</protein>
<proteinExistence type="evidence at protein level"/>
<evidence type="ECO:0000250" key="1">
    <source>
        <dbReference type="UniProtKB" id="I6L8L6"/>
    </source>
</evidence>
<evidence type="ECO:0000250" key="2">
    <source>
        <dbReference type="UniProtKB" id="Q90249"/>
    </source>
</evidence>
<evidence type="ECO:0000269" key="3">
    <source>
    </source>
</evidence>
<evidence type="ECO:0000303" key="4">
    <source>
    </source>
</evidence>
<evidence type="ECO:0000305" key="5"/>
<evidence type="ECO:0000305" key="6">
    <source>
    </source>
</evidence>
<accession>P0DUP0</accession>
<feature type="chain" id="PRO_0000452901" description="Basic phospholipase A2 homolog BdipTx-I" evidence="3">
    <location>
        <begin position="1"/>
        <end position="68" status="greater than"/>
    </location>
</feature>
<feature type="disulfide bond" evidence="2">
    <location>
        <begin position="26"/>
        <end status="unknown"/>
    </location>
</feature>
<feature type="disulfide bond" evidence="2">
    <location>
        <begin position="28"/>
        <end position="44"/>
    </location>
</feature>
<feature type="disulfide bond" evidence="2">
    <location>
        <begin position="43"/>
        <end status="unknown"/>
    </location>
</feature>
<feature type="disulfide bond" evidence="2">
    <location>
        <begin position="49"/>
        <end status="unknown"/>
    </location>
</feature>
<feature type="disulfide bond" evidence="2">
    <location>
        <begin position="50"/>
        <end status="unknown"/>
    </location>
</feature>
<feature type="disulfide bond" evidence="2">
    <location>
        <begin position="57"/>
        <end status="unknown"/>
    </location>
</feature>
<feature type="non-terminal residue" evidence="5">
    <location>
        <position position="68"/>
    </location>
</feature>
<reference key="1">
    <citation type="journal article" date="2018" name="Toxicon">
        <title>Local and systemic effects of BdipTX-I, a Lys-49 phospholipase A2 isolated from Bothrops diporus snake venom.</title>
        <authorList>
            <person name="Teixera L.F."/>
            <person name="de Carvalho L.H."/>
            <person name="de Castro O.B."/>
            <person name="Bastos J.S.F."/>
            <person name="Nery N.M."/>
            <person name="Oliveira G.A."/>
            <person name="Kayano A.M."/>
            <person name="Soares A.M."/>
            <person name="Zuliani J.P."/>
        </authorList>
    </citation>
    <scope>PROTEIN SEQUENCE</scope>
    <scope>FUNCTION</scope>
    <scope>SUBCELLULAR LOCATION</scope>
    <source>
        <tissue>Venom</tissue>
    </source>
</reference>
<organism>
    <name type="scientific">Bothrops diporus</name>
    <name type="common">Chaco lancehead</name>
    <name type="synonym">Bothrops neuwiedi diporus</name>
    <dbReference type="NCBI Taxonomy" id="1107943"/>
    <lineage>
        <taxon>Eukaryota</taxon>
        <taxon>Metazoa</taxon>
        <taxon>Chordata</taxon>
        <taxon>Craniata</taxon>
        <taxon>Vertebrata</taxon>
        <taxon>Euteleostomi</taxon>
        <taxon>Lepidosauria</taxon>
        <taxon>Squamata</taxon>
        <taxon>Bifurcata</taxon>
        <taxon>Unidentata</taxon>
        <taxon>Episquamata</taxon>
        <taxon>Toxicofera</taxon>
        <taxon>Serpentes</taxon>
        <taxon>Colubroidea</taxon>
        <taxon>Viperidae</taxon>
        <taxon>Crotalinae</taxon>
        <taxon>Bothrops</taxon>
    </lineage>
</organism>
<name>PA2H1_BOTDP</name>
<sequence length="68" mass="7663">SLFELGKMILQETGKNPAKSYGAYGCNCGVLGRGKPKEATQRCCYVHKCCYKKLTGCDPKKDRYSYSW</sequence>
<keyword id="KW-0903">Direct protein sequencing</keyword>
<keyword id="KW-1015">Disulfide bond</keyword>
<keyword id="KW-0959">Myotoxin</keyword>
<keyword id="KW-0964">Secreted</keyword>
<keyword id="KW-0800">Toxin</keyword>